<proteinExistence type="evidence at protein level"/>
<name>GPI8_CAEEL</name>
<gene>
    <name evidence="5" type="primary">pigk-1</name>
    <name evidence="5" type="synonym">hpo-4</name>
    <name evidence="5" type="ORF">T05E11.6</name>
</gene>
<sequence length="319" mass="36417">MRHVLLIFCAIIATEALLNTGLQLKIDELFDTPGHTNNWAVLVCTSKFWFNYRHVSNVLALYHSIKRLGIPDSNIIMMLAEDVPCNSRNPRPGTVYAARAGTNLYGSDVEVDYRGEEVTVESFIRVLTGRHHPATPRSKRLLTDHQSNVLIYLTGHGGDSFMKFQDSEELTNVDLAYAIQTMFEDNRYHEMLVIADSCRSASMYEWIDSPNVLSLSSSLTHEESYSYDVDTDIGVYVIDRYTHYTVNFLTKEVKALNSSANMQDYIDSCPARKCLSNTGVRKDHYPKDVKRVRVTDFFGSSRIFQHLSEEIVLDDEFWA</sequence>
<keyword id="KW-0325">Glycoprotein</keyword>
<keyword id="KW-0337">GPI-anchor biosynthesis</keyword>
<keyword id="KW-0378">Hydrolase</keyword>
<keyword id="KW-0645">Protease</keyword>
<keyword id="KW-1185">Reference proteome</keyword>
<keyword id="KW-0732">Signal</keyword>
<keyword id="KW-0788">Thiol protease</keyword>
<dbReference type="EC" id="3.-.-.-"/>
<dbReference type="EMBL" id="BX284604">
    <property type="protein sequence ID" value="CAA92977.2"/>
    <property type="molecule type" value="Genomic_DNA"/>
</dbReference>
<dbReference type="PIR" id="T24525">
    <property type="entry name" value="T24525"/>
</dbReference>
<dbReference type="RefSeq" id="NP_001366758.1">
    <property type="nucleotide sequence ID" value="NM_001380460.2"/>
</dbReference>
<dbReference type="RefSeq" id="NP_502076.2">
    <property type="nucleotide sequence ID" value="NM_069675.2"/>
</dbReference>
<dbReference type="SMR" id="P49048"/>
<dbReference type="BioGRID" id="52804">
    <property type="interactions" value="4"/>
</dbReference>
<dbReference type="FunCoup" id="P49048">
    <property type="interactions" value="2414"/>
</dbReference>
<dbReference type="STRING" id="6239.T05E11.6.1"/>
<dbReference type="MEROPS" id="C13.005"/>
<dbReference type="GlyCosmos" id="P49048">
    <property type="glycosylation" value="1 site, No reported glycans"/>
</dbReference>
<dbReference type="iPTMnet" id="P49048"/>
<dbReference type="PaxDb" id="6239-T05E11.6"/>
<dbReference type="PeptideAtlas" id="P49048"/>
<dbReference type="EnsemblMetazoa" id="T05E11.6.1">
    <property type="protein sequence ID" value="T05E11.6.1"/>
    <property type="gene ID" value="WBGene00011482"/>
</dbReference>
<dbReference type="GeneID" id="188131"/>
<dbReference type="UCSC" id="T05E11.6">
    <property type="organism name" value="c. elegans"/>
</dbReference>
<dbReference type="AGR" id="WB:WBGene00011482"/>
<dbReference type="WormBase" id="T05E11.6">
    <property type="protein sequence ID" value="CE40776"/>
    <property type="gene ID" value="WBGene00011482"/>
    <property type="gene designation" value="pigk-1"/>
</dbReference>
<dbReference type="eggNOG" id="KOG1349">
    <property type="taxonomic scope" value="Eukaryota"/>
</dbReference>
<dbReference type="GeneTree" id="ENSGT00940000156273"/>
<dbReference type="HOGENOM" id="CLU_044656_1_0_1"/>
<dbReference type="InParanoid" id="P49048"/>
<dbReference type="OMA" id="VMESQFP"/>
<dbReference type="OrthoDB" id="192611at2759"/>
<dbReference type="PhylomeDB" id="P49048"/>
<dbReference type="UniPathway" id="UPA00196"/>
<dbReference type="PRO" id="PR:P49048"/>
<dbReference type="Proteomes" id="UP000001940">
    <property type="component" value="Chromosome IV"/>
</dbReference>
<dbReference type="Bgee" id="WBGene00011482">
    <property type="expression patterns" value="Expressed in adult organism and 3 other cell types or tissues"/>
</dbReference>
<dbReference type="GO" id="GO:0042765">
    <property type="term" value="C:GPI-anchor transamidase complex"/>
    <property type="evidence" value="ECO:0000318"/>
    <property type="project" value="GO_Central"/>
</dbReference>
<dbReference type="GO" id="GO:0003923">
    <property type="term" value="F:GPI-anchor transamidase activity"/>
    <property type="evidence" value="ECO:0000318"/>
    <property type="project" value="GO_Central"/>
</dbReference>
<dbReference type="GO" id="GO:0016255">
    <property type="term" value="P:attachment of GPI anchor to protein"/>
    <property type="evidence" value="ECO:0000318"/>
    <property type="project" value="GO_Central"/>
</dbReference>
<dbReference type="GO" id="GO:0006506">
    <property type="term" value="P:GPI anchor biosynthetic process"/>
    <property type="evidence" value="ECO:0007669"/>
    <property type="project" value="UniProtKB-UniPathway"/>
</dbReference>
<dbReference type="GO" id="GO:0006508">
    <property type="term" value="P:proteolysis"/>
    <property type="evidence" value="ECO:0007669"/>
    <property type="project" value="UniProtKB-KW"/>
</dbReference>
<dbReference type="FunFam" id="3.40.50.1460:FF:000016">
    <property type="entry name" value="GPI-anchor transamidase, putative"/>
    <property type="match status" value="1"/>
</dbReference>
<dbReference type="Gene3D" id="3.40.50.1460">
    <property type="match status" value="1"/>
</dbReference>
<dbReference type="InterPro" id="IPR028361">
    <property type="entry name" value="GPI_transamidase"/>
</dbReference>
<dbReference type="InterPro" id="IPR001096">
    <property type="entry name" value="Peptidase_C13"/>
</dbReference>
<dbReference type="PANTHER" id="PTHR48067">
    <property type="entry name" value="GPI-ANCHOR TRANSAMIDASE"/>
    <property type="match status" value="1"/>
</dbReference>
<dbReference type="PANTHER" id="PTHR48067:SF1">
    <property type="entry name" value="GPI-ANCHOR TRANSAMIDASE"/>
    <property type="match status" value="1"/>
</dbReference>
<dbReference type="Pfam" id="PF01650">
    <property type="entry name" value="Peptidase_C13"/>
    <property type="match status" value="1"/>
</dbReference>
<dbReference type="PRINTS" id="PR00776">
    <property type="entry name" value="HEMOGLOBNASE"/>
</dbReference>
<reference key="1">
    <citation type="journal article" date="1998" name="Science">
        <title>Genome sequence of the nematode C. elegans: a platform for investigating biology.</title>
        <authorList>
            <consortium name="The C. elegans sequencing consortium"/>
        </authorList>
    </citation>
    <scope>NUCLEOTIDE SEQUENCE [LARGE SCALE GENOMIC DNA]</scope>
    <source>
        <strain>Bristol N2</strain>
    </source>
</reference>
<reference key="2">
    <citation type="journal article" date="2007" name="Mol. Cell. Proteomics">
        <title>Proteomics reveals N-linked glycoprotein diversity in Caenorhabditis elegans and suggests an atypical translocation mechanism for integral membrane proteins.</title>
        <authorList>
            <person name="Kaji H."/>
            <person name="Kamiie J."/>
            <person name="Kawakami H."/>
            <person name="Kido K."/>
            <person name="Yamauchi Y."/>
            <person name="Shinkawa T."/>
            <person name="Taoka M."/>
            <person name="Takahashi N."/>
            <person name="Isobe T."/>
        </authorList>
    </citation>
    <scope>GLYCOSYLATION [LARGE SCALE ANALYSIS] AT ASN-257</scope>
    <scope>IDENTIFICATION BY MASS SPECTROMETRY</scope>
    <source>
        <strain>Bristol N2</strain>
    </source>
</reference>
<organism>
    <name type="scientific">Caenorhabditis elegans</name>
    <dbReference type="NCBI Taxonomy" id="6239"/>
    <lineage>
        <taxon>Eukaryota</taxon>
        <taxon>Metazoa</taxon>
        <taxon>Ecdysozoa</taxon>
        <taxon>Nematoda</taxon>
        <taxon>Chromadorea</taxon>
        <taxon>Rhabditida</taxon>
        <taxon>Rhabditina</taxon>
        <taxon>Rhabditomorpha</taxon>
        <taxon>Rhabditoidea</taxon>
        <taxon>Rhabditidae</taxon>
        <taxon>Peloderinae</taxon>
        <taxon>Caenorhabditis</taxon>
    </lineage>
</organism>
<accession>P49048</accession>
<evidence type="ECO:0000250" key="1"/>
<evidence type="ECO:0000255" key="2"/>
<evidence type="ECO:0000269" key="3">
    <source>
    </source>
</evidence>
<evidence type="ECO:0000305" key="4"/>
<evidence type="ECO:0000312" key="5">
    <source>
        <dbReference type="WormBase" id="T05E11.6"/>
    </source>
</evidence>
<protein>
    <recommendedName>
        <fullName>Putative GPI-anchor transamidase</fullName>
        <shortName>GPI transamidase</shortName>
        <ecNumber>3.-.-.-</ecNumber>
    </recommendedName>
    <alternativeName>
        <fullName evidence="4">Hypersensitive to pore-forming toxin protein 4</fullName>
    </alternativeName>
    <alternativeName>
        <fullName evidence="5">Phosphatidylinositol-glycan biosynthesis class K protein</fullName>
        <shortName evidence="4">PIG-K</shortName>
    </alternativeName>
</protein>
<comment type="function">
    <text evidence="1">Mediates GPI anchoring in the endoplasmic reticulum, by replacing a protein's C-terminal GPI attachment signal peptide with a pre-assembled GPI. During this transamidation reaction, the GPI transamidase forms a carbonyl intermediate with the substrate protein (By similarity).</text>
</comment>
<comment type="pathway">
    <text>Glycolipid biosynthesis; glycosylphosphatidylinositol-anchor biosynthesis.</text>
</comment>
<comment type="similarity">
    <text evidence="4">Belongs to the peptidase C13 family.</text>
</comment>
<feature type="signal peptide" evidence="2">
    <location>
        <begin position="1"/>
        <end position="16"/>
    </location>
</feature>
<feature type="chain" id="PRO_0000215381" description="Putative GPI-anchor transamidase">
    <location>
        <begin position="17"/>
        <end position="319"/>
    </location>
</feature>
<feature type="active site" evidence="1">
    <location>
        <position position="156"/>
    </location>
</feature>
<feature type="active site" evidence="1">
    <location>
        <position position="198"/>
    </location>
</feature>
<feature type="glycosylation site" description="N-linked (GlcNAc...) asparagine" evidence="3">
    <location>
        <position position="257"/>
    </location>
</feature>